<name>DEGPL_RHIME</name>
<proteinExistence type="inferred from homology"/>
<protein>
    <recommendedName>
        <fullName>Probable periplasmic serine endoprotease DegP-like</fullName>
        <ecNumber>3.4.21.107</ecNumber>
    </recommendedName>
    <alternativeName>
        <fullName>Protease Do</fullName>
    </alternativeName>
</protein>
<sequence length="504" mass="53035">MLKTTTVAGLAAVLLTTGLPAEVAQSFAEAVRVQAPAVPSFANVVDAVSPAVVSVRVQARERVSDDESNFTFDFGGRGFEDLPEDHPLRRFFREFAPRENDRADRWRDRRGPRGEGRLRPRAQGSGFFITEDGYLVTNNHVVSDGSAFTVIMNDGTELDAKLVGKDSRTDLAVLKVDDKRKFTYVSFADDEKVRVGDWVVAVGNPFGLGGTVTAGIISARGRDIGSGPYDDYLQVDAAVNRGNSGGPTFNLSGEVVGINTAIFSPSGGNVGIAFAIPASVAKDVVDSLIKDGTVSRGWLGVQIQPVTKDIAESLGLSEANGALVVEPQAGSPGEKAGIKNGDVVTALNGEPVKDPRDLARRVAALRPGSTAEVTLWRSGKSETVNLEIGTLPSDAKEPAPATGEAQPDEGQAGEEALADLGLTVTPSEDGKGVTIASVDPDSDAGDRGLKEGEKIVSVNNQEVKSADDVLKVINNAKKDGRSKALFQIEAQEGSRFVALPITQG</sequence>
<keyword id="KW-0378">Hydrolase</keyword>
<keyword id="KW-0574">Periplasm</keyword>
<keyword id="KW-0645">Protease</keyword>
<keyword id="KW-1185">Reference proteome</keyword>
<keyword id="KW-0677">Repeat</keyword>
<keyword id="KW-0720">Serine protease</keyword>
<keyword id="KW-0732">Signal</keyword>
<keyword id="KW-0346">Stress response</keyword>
<organism>
    <name type="scientific">Rhizobium meliloti (strain 1021)</name>
    <name type="common">Ensifer meliloti</name>
    <name type="synonym">Sinorhizobium meliloti</name>
    <dbReference type="NCBI Taxonomy" id="266834"/>
    <lineage>
        <taxon>Bacteria</taxon>
        <taxon>Pseudomonadati</taxon>
        <taxon>Pseudomonadota</taxon>
        <taxon>Alphaproteobacteria</taxon>
        <taxon>Hyphomicrobiales</taxon>
        <taxon>Rhizobiaceae</taxon>
        <taxon>Sinorhizobium/Ensifer group</taxon>
        <taxon>Sinorhizobium</taxon>
    </lineage>
</organism>
<comment type="function">
    <text evidence="1">Might be efficient in the degradation of transiently denatured and unfolded proteins which accumulate in the periplasm following stress conditions.</text>
</comment>
<comment type="catalytic activity">
    <reaction>
        <text>Acts on substrates that are at least partially unfolded. The cleavage site P1 residue is normally between a pair of hydrophobic residues, such as Val-|-Val.</text>
        <dbReference type="EC" id="3.4.21.107"/>
    </reaction>
</comment>
<comment type="subcellular location">
    <subcellularLocation>
        <location evidence="5">Periplasm</location>
    </subcellularLocation>
</comment>
<comment type="similarity">
    <text evidence="5">Belongs to the peptidase S1C family.</text>
</comment>
<comment type="sequence caution" evidence="5">
    <conflict type="erroneous initiation">
        <sequence resource="EMBL-CDS" id="AAC43669"/>
    </conflict>
    <text>Extended N-terminus.</text>
</comment>
<gene>
    <name type="primary">degP1</name>
    <name type="synonym">degP</name>
    <name type="ordered locus">R01021</name>
    <name type="ORF">SMc02365</name>
</gene>
<evidence type="ECO:0000250" key="1"/>
<evidence type="ECO:0000255" key="2"/>
<evidence type="ECO:0000255" key="3">
    <source>
        <dbReference type="PROSITE-ProRule" id="PRU00143"/>
    </source>
</evidence>
<evidence type="ECO:0000256" key="4">
    <source>
        <dbReference type="SAM" id="MobiDB-lite"/>
    </source>
</evidence>
<evidence type="ECO:0000305" key="5"/>
<feature type="signal peptide" evidence="2">
    <location>
        <begin position="1"/>
        <end position="26"/>
    </location>
</feature>
<feature type="chain" id="PRO_0000026933" description="Probable periplasmic serine endoprotease DegP-like">
    <location>
        <begin position="27"/>
        <end position="504"/>
    </location>
</feature>
<feature type="domain" description="PDZ 1" evidence="3">
    <location>
        <begin position="287"/>
        <end position="378"/>
    </location>
</feature>
<feature type="domain" description="PDZ 2" evidence="3">
    <location>
        <begin position="401"/>
        <end position="491"/>
    </location>
</feature>
<feature type="region of interest" description="Disordered" evidence="4">
    <location>
        <begin position="102"/>
        <end position="122"/>
    </location>
</feature>
<feature type="region of interest" description="Serine protease">
    <location>
        <begin position="113"/>
        <end position="286"/>
    </location>
</feature>
<feature type="region of interest" description="Disordered" evidence="4">
    <location>
        <begin position="389"/>
        <end position="411"/>
    </location>
</feature>
<feature type="region of interest" description="Disordered" evidence="4">
    <location>
        <begin position="428"/>
        <end position="447"/>
    </location>
</feature>
<feature type="compositionally biased region" description="Basic and acidic residues" evidence="4">
    <location>
        <begin position="102"/>
        <end position="118"/>
    </location>
</feature>
<feature type="active site" description="Charge relay system" evidence="2">
    <location>
        <position position="140"/>
    </location>
</feature>
<feature type="active site" description="Charge relay system" evidence="2">
    <location>
        <position position="170"/>
    </location>
</feature>
<feature type="active site" description="Charge relay system" evidence="2">
    <location>
        <position position="244"/>
    </location>
</feature>
<feature type="binding site" evidence="1">
    <location>
        <begin position="242"/>
        <end position="244"/>
    </location>
    <ligand>
        <name>substrate</name>
    </ligand>
</feature>
<feature type="binding site" evidence="1">
    <location>
        <begin position="299"/>
        <end position="303"/>
    </location>
    <ligand>
        <name>substrate</name>
    </ligand>
</feature>
<feature type="sequence conflict" description="In Ref. 1; AAC43669." evidence="5" ref="1">
    <original>LL</original>
    <variation>PV</variation>
    <location>
        <begin position="14"/>
        <end position="15"/>
    </location>
</feature>
<feature type="sequence conflict" description="In Ref. 1; AAC43669." evidence="5" ref="1">
    <original>PSFANVVDAVSPAVVSVRVQARERVSDDESNFTFDFGGRGFEDLPEDHPLRRFFREFAPRENDRADRWRDRRGPRGEGRLRPRAQGSGFFITEDGYLVTNNHVVSDGSA</original>
    <variation>AVSPMWSTPFRRRSSPSACRHVNASATMKATSPSISAAAGSRTCRKTIRCGVSSANSLRVKMTVPIVGATAAVRVAKVVSVRGRKAPASSSPKTVTSSPTTTSSPTART</variation>
    <location>
        <begin position="39"/>
        <end position="147"/>
    </location>
</feature>
<feature type="sequence conflict" description="In Ref. 1; AAC43669." evidence="5" ref="1">
    <original>KSADDVLKVINNAKKDGRSKALFQIEAQEGSRFVALPITQG</original>
    <variation>NRQTTFSR</variation>
    <location>
        <begin position="464"/>
        <end position="504"/>
    </location>
</feature>
<reference key="1">
    <citation type="journal article" date="1996" name="J. Bacteriol.">
        <title>Genetic analysis of Rhizobium meliloti bacA-phoA fusion results in identification of degP: two loci required for symbiosis are closely linked to degP.</title>
        <authorList>
            <person name="Glazebrook J."/>
            <person name="Ichige A."/>
            <person name="Walker G.C."/>
        </authorList>
    </citation>
    <scope>NUCLEOTIDE SEQUENCE [GENOMIC DNA]</scope>
    <source>
        <strain>1021</strain>
    </source>
</reference>
<reference key="2">
    <citation type="journal article" date="2001" name="Proc. Natl. Acad. Sci. U.S.A.">
        <title>Analysis of the chromosome sequence of the legume symbiont Sinorhizobium meliloti strain 1021.</title>
        <authorList>
            <person name="Capela D."/>
            <person name="Barloy-Hubler F."/>
            <person name="Gouzy J."/>
            <person name="Bothe G."/>
            <person name="Ampe F."/>
            <person name="Batut J."/>
            <person name="Boistard P."/>
            <person name="Becker A."/>
            <person name="Boutry M."/>
            <person name="Cadieu E."/>
            <person name="Dreano S."/>
            <person name="Gloux S."/>
            <person name="Godrie T."/>
            <person name="Goffeau A."/>
            <person name="Kahn D."/>
            <person name="Kiss E."/>
            <person name="Lelaure V."/>
            <person name="Masuy D."/>
            <person name="Pohl T."/>
            <person name="Portetelle D."/>
            <person name="Puehler A."/>
            <person name="Purnelle B."/>
            <person name="Ramsperger U."/>
            <person name="Renard C."/>
            <person name="Thebault P."/>
            <person name="Vandenbol M."/>
            <person name="Weidner S."/>
            <person name="Galibert F."/>
        </authorList>
    </citation>
    <scope>NUCLEOTIDE SEQUENCE [LARGE SCALE GENOMIC DNA]</scope>
    <source>
        <strain>1021</strain>
    </source>
</reference>
<reference key="3">
    <citation type="journal article" date="2001" name="Science">
        <title>The composite genome of the legume symbiont Sinorhizobium meliloti.</title>
        <authorList>
            <person name="Galibert F."/>
            <person name="Finan T.M."/>
            <person name="Long S.R."/>
            <person name="Puehler A."/>
            <person name="Abola P."/>
            <person name="Ampe F."/>
            <person name="Barloy-Hubler F."/>
            <person name="Barnett M.J."/>
            <person name="Becker A."/>
            <person name="Boistard P."/>
            <person name="Bothe G."/>
            <person name="Boutry M."/>
            <person name="Bowser L."/>
            <person name="Buhrmester J."/>
            <person name="Cadieu E."/>
            <person name="Capela D."/>
            <person name="Chain P."/>
            <person name="Cowie A."/>
            <person name="Davis R.W."/>
            <person name="Dreano S."/>
            <person name="Federspiel N.A."/>
            <person name="Fisher R.F."/>
            <person name="Gloux S."/>
            <person name="Godrie T."/>
            <person name="Goffeau A."/>
            <person name="Golding B."/>
            <person name="Gouzy J."/>
            <person name="Gurjal M."/>
            <person name="Hernandez-Lucas I."/>
            <person name="Hong A."/>
            <person name="Huizar L."/>
            <person name="Hyman R.W."/>
            <person name="Jones T."/>
            <person name="Kahn D."/>
            <person name="Kahn M.L."/>
            <person name="Kalman S."/>
            <person name="Keating D.H."/>
            <person name="Kiss E."/>
            <person name="Komp C."/>
            <person name="Lelaure V."/>
            <person name="Masuy D."/>
            <person name="Palm C."/>
            <person name="Peck M.C."/>
            <person name="Pohl T.M."/>
            <person name="Portetelle D."/>
            <person name="Purnelle B."/>
            <person name="Ramsperger U."/>
            <person name="Surzycki R."/>
            <person name="Thebault P."/>
            <person name="Vandenbol M."/>
            <person name="Vorhoelter F.J."/>
            <person name="Weidner S."/>
            <person name="Wells D.H."/>
            <person name="Wong K."/>
            <person name="Yeh K.-C."/>
            <person name="Batut J."/>
        </authorList>
    </citation>
    <scope>NUCLEOTIDE SEQUENCE [LARGE SCALE GENOMIC DNA]</scope>
    <source>
        <strain>1021</strain>
    </source>
</reference>
<accession>Q52894</accession>
<dbReference type="EC" id="3.4.21.107"/>
<dbReference type="EMBL" id="U31512">
    <property type="protein sequence ID" value="AAC43669.1"/>
    <property type="status" value="ALT_INIT"/>
    <property type="molecule type" value="Genomic_DNA"/>
</dbReference>
<dbReference type="EMBL" id="AL591688">
    <property type="protein sequence ID" value="CAC45593.1"/>
    <property type="molecule type" value="Genomic_DNA"/>
</dbReference>
<dbReference type="RefSeq" id="NP_385127.1">
    <property type="nucleotide sequence ID" value="NC_003047.1"/>
</dbReference>
<dbReference type="SMR" id="Q52894"/>
<dbReference type="EnsemblBacteria" id="CAC45593">
    <property type="protein sequence ID" value="CAC45593"/>
    <property type="gene ID" value="SMc02365"/>
</dbReference>
<dbReference type="KEGG" id="sme:SMc02365"/>
<dbReference type="PATRIC" id="fig|266834.11.peg.2426"/>
<dbReference type="eggNOG" id="COG0265">
    <property type="taxonomic scope" value="Bacteria"/>
</dbReference>
<dbReference type="HOGENOM" id="CLU_020120_1_0_5"/>
<dbReference type="OrthoDB" id="9758917at2"/>
<dbReference type="Proteomes" id="UP000001976">
    <property type="component" value="Chromosome"/>
</dbReference>
<dbReference type="GO" id="GO:0030288">
    <property type="term" value="C:outer membrane-bounded periplasmic space"/>
    <property type="evidence" value="ECO:0000250"/>
    <property type="project" value="UniProtKB"/>
</dbReference>
<dbReference type="GO" id="GO:0004252">
    <property type="term" value="F:serine-type endopeptidase activity"/>
    <property type="evidence" value="ECO:0000250"/>
    <property type="project" value="UniProtKB"/>
</dbReference>
<dbReference type="GO" id="GO:0006508">
    <property type="term" value="P:proteolysis"/>
    <property type="evidence" value="ECO:0007669"/>
    <property type="project" value="UniProtKB-KW"/>
</dbReference>
<dbReference type="CDD" id="cd10839">
    <property type="entry name" value="cpPDZ1_DegP-like"/>
    <property type="match status" value="1"/>
</dbReference>
<dbReference type="CDD" id="cd23084">
    <property type="entry name" value="cpPDZ2_DegP-like"/>
    <property type="match status" value="1"/>
</dbReference>
<dbReference type="FunFam" id="2.30.42.10:FF:000037">
    <property type="entry name" value="Periplasmic serine endoprotease DegP-like"/>
    <property type="match status" value="1"/>
</dbReference>
<dbReference type="FunFam" id="2.30.42.10:FF:000197">
    <property type="entry name" value="Periplasmic serine endoprotease DegP-like"/>
    <property type="match status" value="1"/>
</dbReference>
<dbReference type="FunFam" id="2.40.10.120:FF:000007">
    <property type="entry name" value="Periplasmic serine endoprotease DegP-like"/>
    <property type="match status" value="1"/>
</dbReference>
<dbReference type="Gene3D" id="2.30.42.10">
    <property type="match status" value="2"/>
</dbReference>
<dbReference type="Gene3D" id="2.40.10.120">
    <property type="match status" value="1"/>
</dbReference>
<dbReference type="InterPro" id="IPR001478">
    <property type="entry name" value="PDZ"/>
</dbReference>
<dbReference type="InterPro" id="IPR036034">
    <property type="entry name" value="PDZ_sf"/>
</dbReference>
<dbReference type="InterPro" id="IPR011782">
    <property type="entry name" value="Pept_S1C_Do"/>
</dbReference>
<dbReference type="InterPro" id="IPR009003">
    <property type="entry name" value="Peptidase_S1_PA"/>
</dbReference>
<dbReference type="InterPro" id="IPR001940">
    <property type="entry name" value="Peptidase_S1C"/>
</dbReference>
<dbReference type="NCBIfam" id="TIGR02037">
    <property type="entry name" value="degP_htrA_DO"/>
    <property type="match status" value="1"/>
</dbReference>
<dbReference type="PANTHER" id="PTHR22939:SF130">
    <property type="entry name" value="PERIPLASMIC SERINE ENDOPROTEASE DEGP-LIKE-RELATED"/>
    <property type="match status" value="1"/>
</dbReference>
<dbReference type="PANTHER" id="PTHR22939">
    <property type="entry name" value="SERINE PROTEASE FAMILY S1C HTRA-RELATED"/>
    <property type="match status" value="1"/>
</dbReference>
<dbReference type="Pfam" id="PF13180">
    <property type="entry name" value="PDZ_2"/>
    <property type="match status" value="2"/>
</dbReference>
<dbReference type="Pfam" id="PF13365">
    <property type="entry name" value="Trypsin_2"/>
    <property type="match status" value="1"/>
</dbReference>
<dbReference type="PRINTS" id="PR00834">
    <property type="entry name" value="PROTEASES2C"/>
</dbReference>
<dbReference type="SMART" id="SM00228">
    <property type="entry name" value="PDZ"/>
    <property type="match status" value="2"/>
</dbReference>
<dbReference type="SUPFAM" id="SSF50156">
    <property type="entry name" value="PDZ domain-like"/>
    <property type="match status" value="2"/>
</dbReference>
<dbReference type="SUPFAM" id="SSF50494">
    <property type="entry name" value="Trypsin-like serine proteases"/>
    <property type="match status" value="1"/>
</dbReference>
<dbReference type="PROSITE" id="PS50106">
    <property type="entry name" value="PDZ"/>
    <property type="match status" value="2"/>
</dbReference>